<keyword id="KW-0520">NAD</keyword>
<keyword id="KW-0560">Oxidoreductase</keyword>
<keyword id="KW-1185">Reference proteome</keyword>
<proteinExistence type="inferred from homology"/>
<protein>
    <recommendedName>
        <fullName evidence="1">Inositol 2-dehydrogenase</fullName>
        <ecNumber evidence="1">1.1.1.18</ecNumber>
    </recommendedName>
    <alternativeName>
        <fullName evidence="1">Myo-inositol 2-dehydrogenase</fullName>
        <shortName evidence="1">MI 2-dehydrogenase</shortName>
    </alternativeName>
</protein>
<dbReference type="EC" id="1.1.1.18" evidence="1"/>
<dbReference type="EMBL" id="CP000868">
    <property type="protein sequence ID" value="ABX15574.1"/>
    <property type="molecule type" value="Genomic_DNA"/>
</dbReference>
<dbReference type="EMBL" id="AP009385">
    <property type="protein sequence ID" value="BAG43290.1"/>
    <property type="molecule type" value="Genomic_DNA"/>
</dbReference>
<dbReference type="RefSeq" id="WP_012213575.1">
    <property type="nucleotide sequence ID" value="NC_010084.1"/>
</dbReference>
<dbReference type="SMR" id="A9ABZ7"/>
<dbReference type="STRING" id="395019.BMULJ_01354"/>
<dbReference type="KEGG" id="bmj:BMULJ_01354"/>
<dbReference type="KEGG" id="bmu:Bmul_1887"/>
<dbReference type="eggNOG" id="COG0673">
    <property type="taxonomic scope" value="Bacteria"/>
</dbReference>
<dbReference type="HOGENOM" id="CLU_023194_0_1_4"/>
<dbReference type="Proteomes" id="UP000008815">
    <property type="component" value="Chromosome 1"/>
</dbReference>
<dbReference type="GO" id="GO:0050112">
    <property type="term" value="F:inositol 2-dehydrogenase (NAD+) activity"/>
    <property type="evidence" value="ECO:0007669"/>
    <property type="project" value="UniProtKB-UniRule"/>
</dbReference>
<dbReference type="GO" id="GO:0000166">
    <property type="term" value="F:nucleotide binding"/>
    <property type="evidence" value="ECO:0007669"/>
    <property type="project" value="InterPro"/>
</dbReference>
<dbReference type="GO" id="GO:0019310">
    <property type="term" value="P:inositol catabolic process"/>
    <property type="evidence" value="ECO:0007669"/>
    <property type="project" value="UniProtKB-UniRule"/>
</dbReference>
<dbReference type="Gene3D" id="3.30.360.10">
    <property type="entry name" value="Dihydrodipicolinate Reductase, domain 2"/>
    <property type="match status" value="1"/>
</dbReference>
<dbReference type="Gene3D" id="3.40.50.720">
    <property type="entry name" value="NAD(P)-binding Rossmann-like Domain"/>
    <property type="match status" value="1"/>
</dbReference>
<dbReference type="HAMAP" id="MF_01671">
    <property type="entry name" value="IolG"/>
    <property type="match status" value="1"/>
</dbReference>
<dbReference type="InterPro" id="IPR050424">
    <property type="entry name" value="Gfo-Idh-MocA_inositol_DH"/>
</dbReference>
<dbReference type="InterPro" id="IPR004104">
    <property type="entry name" value="Gfo/Idh/MocA-like_OxRdtase_C"/>
</dbReference>
<dbReference type="InterPro" id="IPR000683">
    <property type="entry name" value="Gfo/Idh/MocA-like_OxRdtase_N"/>
</dbReference>
<dbReference type="InterPro" id="IPR023794">
    <property type="entry name" value="MI/DCI_dehydrogenase"/>
</dbReference>
<dbReference type="InterPro" id="IPR036291">
    <property type="entry name" value="NAD(P)-bd_dom_sf"/>
</dbReference>
<dbReference type="PANTHER" id="PTHR43593">
    <property type="match status" value="1"/>
</dbReference>
<dbReference type="PANTHER" id="PTHR43593:SF1">
    <property type="entry name" value="INOSITOL 2-DEHYDROGENASE"/>
    <property type="match status" value="1"/>
</dbReference>
<dbReference type="Pfam" id="PF01408">
    <property type="entry name" value="GFO_IDH_MocA"/>
    <property type="match status" value="1"/>
</dbReference>
<dbReference type="Pfam" id="PF02894">
    <property type="entry name" value="GFO_IDH_MocA_C"/>
    <property type="match status" value="1"/>
</dbReference>
<dbReference type="SUPFAM" id="SSF55347">
    <property type="entry name" value="Glyceraldehyde-3-phosphate dehydrogenase-like, C-terminal domain"/>
    <property type="match status" value="1"/>
</dbReference>
<dbReference type="SUPFAM" id="SSF51735">
    <property type="entry name" value="NAD(P)-binding Rossmann-fold domains"/>
    <property type="match status" value="1"/>
</dbReference>
<gene>
    <name evidence="1" type="primary">iolG</name>
    <name type="ordered locus">Bmul_1887</name>
    <name type="ordered locus">BMULJ_01354</name>
</gene>
<accession>A9ABZ7</accession>
<comment type="function">
    <text evidence="1">Involved in the oxidation of myo-inositol (MI) to 2-keto-myo-inositol (2KMI or 2-inosose).</text>
</comment>
<comment type="catalytic activity">
    <reaction evidence="1">
        <text>myo-inositol + NAD(+) = scyllo-inosose + NADH + H(+)</text>
        <dbReference type="Rhea" id="RHEA:16949"/>
        <dbReference type="ChEBI" id="CHEBI:15378"/>
        <dbReference type="ChEBI" id="CHEBI:17268"/>
        <dbReference type="ChEBI" id="CHEBI:17811"/>
        <dbReference type="ChEBI" id="CHEBI:57540"/>
        <dbReference type="ChEBI" id="CHEBI:57945"/>
        <dbReference type="EC" id="1.1.1.18"/>
    </reaction>
</comment>
<comment type="subunit">
    <text evidence="1">Homotetramer.</text>
</comment>
<comment type="similarity">
    <text evidence="1">Belongs to the Gfo/Idh/MocA family.</text>
</comment>
<evidence type="ECO:0000255" key="1">
    <source>
        <dbReference type="HAMAP-Rule" id="MF_01671"/>
    </source>
</evidence>
<reference key="1">
    <citation type="submission" date="2007-10" db="EMBL/GenBank/DDBJ databases">
        <title>Complete sequence of chromosome 1 of Burkholderia multivorans ATCC 17616.</title>
        <authorList>
            <person name="Copeland A."/>
            <person name="Lucas S."/>
            <person name="Lapidus A."/>
            <person name="Barry K."/>
            <person name="Glavina del Rio T."/>
            <person name="Dalin E."/>
            <person name="Tice H."/>
            <person name="Pitluck S."/>
            <person name="Chain P."/>
            <person name="Malfatti S."/>
            <person name="Shin M."/>
            <person name="Vergez L."/>
            <person name="Schmutz J."/>
            <person name="Larimer F."/>
            <person name="Land M."/>
            <person name="Hauser L."/>
            <person name="Kyrpides N."/>
            <person name="Kim E."/>
            <person name="Tiedje J."/>
            <person name="Richardson P."/>
        </authorList>
    </citation>
    <scope>NUCLEOTIDE SEQUENCE [LARGE SCALE GENOMIC DNA]</scope>
    <source>
        <strain>ATCC 17616 / 249</strain>
    </source>
</reference>
<reference key="2">
    <citation type="submission" date="2007-04" db="EMBL/GenBank/DDBJ databases">
        <title>Complete genome sequence of Burkholderia multivorans ATCC 17616.</title>
        <authorList>
            <person name="Ohtsubo Y."/>
            <person name="Yamashita A."/>
            <person name="Kurokawa K."/>
            <person name="Takami H."/>
            <person name="Yuhara S."/>
            <person name="Nishiyama E."/>
            <person name="Endo R."/>
            <person name="Miyazaki R."/>
            <person name="Ono A."/>
            <person name="Yano K."/>
            <person name="Ito M."/>
            <person name="Sota M."/>
            <person name="Yuji N."/>
            <person name="Hattori M."/>
            <person name="Tsuda M."/>
        </authorList>
    </citation>
    <scope>NUCLEOTIDE SEQUENCE [LARGE SCALE GENOMIC DNA]</scope>
    <source>
        <strain>ATCC 17616 / 249</strain>
    </source>
</reference>
<name>IOLG_BURM1</name>
<feature type="chain" id="PRO_0000352563" description="Inositol 2-dehydrogenase">
    <location>
        <begin position="1"/>
        <end position="337"/>
    </location>
</feature>
<sequence>MTLQIGVIGCGAIGQDHIRRLMRTLSGARVVAVNDIDPQQARDAVTHYAPDAEIYADGRDLIAAADVQAVLVTSWGPTHEAFVLDAIAHGKPVFCEKPLAVTADGCMRIVEAELAHGTRLVQVGFMRPYDEGYRALKRVIDSGQIGAPLMLHCAHRNQSVGERYTTDMAITDTLIHELDVLRWLLGEDYVSAQVVYPKKTRHASTHLADPQIVLLETVSGVRIDVEIFVNCQYGYDIQCEVVGENGIAKLPDPPAVGLKHLARQSVEIMTDWKERFIASYDVELQAFIDGVRRQTLTGPSAWDGYAAAVAADACVRAQKSGAVEPIAIAERPAFYRA</sequence>
<organism>
    <name type="scientific">Burkholderia multivorans (strain ATCC 17616 / 249)</name>
    <dbReference type="NCBI Taxonomy" id="395019"/>
    <lineage>
        <taxon>Bacteria</taxon>
        <taxon>Pseudomonadati</taxon>
        <taxon>Pseudomonadota</taxon>
        <taxon>Betaproteobacteria</taxon>
        <taxon>Burkholderiales</taxon>
        <taxon>Burkholderiaceae</taxon>
        <taxon>Burkholderia</taxon>
        <taxon>Burkholderia cepacia complex</taxon>
    </lineage>
</organism>